<feature type="chain" id="PRO_1000070804" description="Cytochrome c-type biogenesis protein CcmE">
    <location>
        <begin position="1"/>
        <end position="158"/>
    </location>
</feature>
<feature type="topological domain" description="Cytoplasmic" evidence="1">
    <location>
        <begin position="1"/>
        <end position="23"/>
    </location>
</feature>
<feature type="transmembrane region" description="Helical; Signal-anchor for type II membrane protein" evidence="1">
    <location>
        <begin position="24"/>
        <end position="44"/>
    </location>
</feature>
<feature type="topological domain" description="Periplasmic" evidence="1">
    <location>
        <begin position="45"/>
        <end position="158"/>
    </location>
</feature>
<feature type="binding site" description="covalent" evidence="1">
    <location>
        <position position="138"/>
    </location>
    <ligand>
        <name>heme</name>
        <dbReference type="ChEBI" id="CHEBI:30413"/>
    </ligand>
</feature>
<feature type="binding site" description="axial binding residue" evidence="1">
    <location>
        <position position="142"/>
    </location>
    <ligand>
        <name>heme</name>
        <dbReference type="ChEBI" id="CHEBI:30413"/>
    </ligand>
    <ligandPart>
        <name>Fe</name>
        <dbReference type="ChEBI" id="CHEBI:18248"/>
    </ligandPart>
</feature>
<comment type="function">
    <text evidence="1">Heme chaperone required for the biogenesis of c-type cytochromes. Transiently binds heme delivered by CcmC and transfers the heme to apo-cytochromes in a process facilitated by CcmF and CcmH.</text>
</comment>
<comment type="subcellular location">
    <subcellularLocation>
        <location evidence="1">Cell inner membrane</location>
        <topology evidence="1">Single-pass type II membrane protein</topology>
        <orientation evidence="1">Periplasmic side</orientation>
    </subcellularLocation>
</comment>
<comment type="similarity">
    <text evidence="1">Belongs to the CcmE/CycJ family.</text>
</comment>
<proteinExistence type="inferred from homology"/>
<protein>
    <recommendedName>
        <fullName evidence="1">Cytochrome c-type biogenesis protein CcmE</fullName>
    </recommendedName>
    <alternativeName>
        <fullName evidence="1">Cytochrome c maturation protein E</fullName>
    </alternativeName>
    <alternativeName>
        <fullName evidence="1">Heme chaperone CcmE</fullName>
    </alternativeName>
</protein>
<reference key="1">
    <citation type="submission" date="2006-12" db="EMBL/GenBank/DDBJ databases">
        <authorList>
            <person name="Hendrix L."/>
            <person name="Mohamoud Y."/>
            <person name="Radune D."/>
            <person name="Shvartsbeyn A."/>
            <person name="Daugherty S."/>
            <person name="Dodson R."/>
            <person name="Durkin A.S."/>
            <person name="Harkins D."/>
            <person name="Huot H."/>
            <person name="Kothari S.P."/>
            <person name="Madupu R."/>
            <person name="Li J."/>
            <person name="Nelson W.C."/>
            <person name="Shrivastava S."/>
            <person name="Giglio M.G."/>
            <person name="Haft D."/>
            <person name="Selengut J."/>
            <person name="Fraser-Ligget C."/>
            <person name="Seshadri R."/>
        </authorList>
    </citation>
    <scope>NUCLEOTIDE SEQUENCE [LARGE SCALE GENOMIC DNA]</scope>
    <source>
        <strain>ATCC 35685 / KC583 / Herrer 020/F12,63</strain>
    </source>
</reference>
<sequence>MNSQSFKNFPSLKFISKKRRKERLLMVLLCLFIMAITTGLIVYAMRNTANFFRTPSEITKEDILTGRVLRLGGIVEKGTVEHNGEMQVTFFVIDHLKHEKVVFNGLLPDLFREGQSVIVEGYFDKQGLFIGKRVLAKHDETYMSKETADRLKKHHDIK</sequence>
<dbReference type="EMBL" id="CP000524">
    <property type="protein sequence ID" value="ABM45347.1"/>
    <property type="molecule type" value="Genomic_DNA"/>
</dbReference>
<dbReference type="RefSeq" id="WP_011807322.1">
    <property type="nucleotide sequence ID" value="NC_008783.1"/>
</dbReference>
<dbReference type="SMR" id="A1URZ6"/>
<dbReference type="STRING" id="360095.BARBAKC583_0431"/>
<dbReference type="GeneID" id="4684972"/>
<dbReference type="KEGG" id="bbk:BARBAKC583_0431"/>
<dbReference type="PATRIC" id="fig|360095.6.peg.413"/>
<dbReference type="eggNOG" id="COG2332">
    <property type="taxonomic scope" value="Bacteria"/>
</dbReference>
<dbReference type="HOGENOM" id="CLU_079503_1_1_5"/>
<dbReference type="OrthoDB" id="9793584at2"/>
<dbReference type="Proteomes" id="UP000000643">
    <property type="component" value="Chromosome"/>
</dbReference>
<dbReference type="GO" id="GO:0005886">
    <property type="term" value="C:plasma membrane"/>
    <property type="evidence" value="ECO:0007669"/>
    <property type="project" value="UniProtKB-SubCell"/>
</dbReference>
<dbReference type="GO" id="GO:0020037">
    <property type="term" value="F:heme binding"/>
    <property type="evidence" value="ECO:0007669"/>
    <property type="project" value="InterPro"/>
</dbReference>
<dbReference type="GO" id="GO:0046872">
    <property type="term" value="F:metal ion binding"/>
    <property type="evidence" value="ECO:0007669"/>
    <property type="project" value="UniProtKB-KW"/>
</dbReference>
<dbReference type="GO" id="GO:0017004">
    <property type="term" value="P:cytochrome complex assembly"/>
    <property type="evidence" value="ECO:0007669"/>
    <property type="project" value="UniProtKB-KW"/>
</dbReference>
<dbReference type="Gene3D" id="2.40.50.140">
    <property type="entry name" value="Nucleic acid-binding proteins"/>
    <property type="match status" value="1"/>
</dbReference>
<dbReference type="HAMAP" id="MF_01959">
    <property type="entry name" value="CcmE"/>
    <property type="match status" value="1"/>
</dbReference>
<dbReference type="InterPro" id="IPR004329">
    <property type="entry name" value="CcmE"/>
</dbReference>
<dbReference type="InterPro" id="IPR036127">
    <property type="entry name" value="CcmE-like_sf"/>
</dbReference>
<dbReference type="InterPro" id="IPR012340">
    <property type="entry name" value="NA-bd_OB-fold"/>
</dbReference>
<dbReference type="NCBIfam" id="NF009727">
    <property type="entry name" value="PRK13254.1-1"/>
    <property type="match status" value="1"/>
</dbReference>
<dbReference type="NCBIfam" id="NF009731">
    <property type="entry name" value="PRK13254.1-5"/>
    <property type="match status" value="1"/>
</dbReference>
<dbReference type="PANTHER" id="PTHR34128">
    <property type="entry name" value="CYTOCHROME C-TYPE BIOGENESIS PROTEIN CCME HOMOLOG, MITOCHONDRIAL"/>
    <property type="match status" value="1"/>
</dbReference>
<dbReference type="PANTHER" id="PTHR34128:SF2">
    <property type="entry name" value="CYTOCHROME C-TYPE BIOGENESIS PROTEIN CCME HOMOLOG, MITOCHONDRIAL"/>
    <property type="match status" value="1"/>
</dbReference>
<dbReference type="Pfam" id="PF03100">
    <property type="entry name" value="CcmE"/>
    <property type="match status" value="1"/>
</dbReference>
<dbReference type="SUPFAM" id="SSF82093">
    <property type="entry name" value="Heme chaperone CcmE"/>
    <property type="match status" value="1"/>
</dbReference>
<evidence type="ECO:0000255" key="1">
    <source>
        <dbReference type="HAMAP-Rule" id="MF_01959"/>
    </source>
</evidence>
<keyword id="KW-0997">Cell inner membrane</keyword>
<keyword id="KW-1003">Cell membrane</keyword>
<keyword id="KW-0201">Cytochrome c-type biogenesis</keyword>
<keyword id="KW-0349">Heme</keyword>
<keyword id="KW-0408">Iron</keyword>
<keyword id="KW-0472">Membrane</keyword>
<keyword id="KW-0479">Metal-binding</keyword>
<keyword id="KW-0735">Signal-anchor</keyword>
<keyword id="KW-0812">Transmembrane</keyword>
<keyword id="KW-1133">Transmembrane helix</keyword>
<gene>
    <name evidence="1" type="primary">ccmE</name>
    <name evidence="1" type="synonym">cycJ</name>
    <name type="ordered locus">BARBAKC583_0431</name>
</gene>
<name>CCME_BARBK</name>
<organism>
    <name type="scientific">Bartonella bacilliformis (strain ATCC 35685 / KC583 / Herrer 020/F12,63)</name>
    <dbReference type="NCBI Taxonomy" id="360095"/>
    <lineage>
        <taxon>Bacteria</taxon>
        <taxon>Pseudomonadati</taxon>
        <taxon>Pseudomonadota</taxon>
        <taxon>Alphaproteobacteria</taxon>
        <taxon>Hyphomicrobiales</taxon>
        <taxon>Bartonellaceae</taxon>
        <taxon>Bartonella</taxon>
    </lineage>
</organism>
<accession>A1URZ6</accession>